<accession>B2TW68</accession>
<dbReference type="EC" id="7.1.1.-" evidence="1"/>
<dbReference type="EMBL" id="CP001063">
    <property type="protein sequence ID" value="ACD08317.1"/>
    <property type="molecule type" value="Genomic_DNA"/>
</dbReference>
<dbReference type="RefSeq" id="WP_000386733.1">
    <property type="nucleotide sequence ID" value="NC_010658.1"/>
</dbReference>
<dbReference type="SMR" id="B2TW68"/>
<dbReference type="STRING" id="344609.SbBS512_E2663"/>
<dbReference type="GeneID" id="93774887"/>
<dbReference type="KEGG" id="sbc:SbBS512_E2663"/>
<dbReference type="HOGENOM" id="CLU_055737_7_3_6"/>
<dbReference type="Proteomes" id="UP000001030">
    <property type="component" value="Chromosome"/>
</dbReference>
<dbReference type="GO" id="GO:0005886">
    <property type="term" value="C:plasma membrane"/>
    <property type="evidence" value="ECO:0007669"/>
    <property type="project" value="UniProtKB-SubCell"/>
</dbReference>
<dbReference type="GO" id="GO:0045271">
    <property type="term" value="C:respiratory chain complex I"/>
    <property type="evidence" value="ECO:0007669"/>
    <property type="project" value="TreeGrafter"/>
</dbReference>
<dbReference type="GO" id="GO:0051539">
    <property type="term" value="F:4 iron, 4 sulfur cluster binding"/>
    <property type="evidence" value="ECO:0007669"/>
    <property type="project" value="UniProtKB-KW"/>
</dbReference>
<dbReference type="GO" id="GO:0005506">
    <property type="term" value="F:iron ion binding"/>
    <property type="evidence" value="ECO:0007669"/>
    <property type="project" value="UniProtKB-UniRule"/>
</dbReference>
<dbReference type="GO" id="GO:0008137">
    <property type="term" value="F:NADH dehydrogenase (ubiquinone) activity"/>
    <property type="evidence" value="ECO:0007669"/>
    <property type="project" value="InterPro"/>
</dbReference>
<dbReference type="GO" id="GO:0050136">
    <property type="term" value="F:NADH:ubiquinone reductase (non-electrogenic) activity"/>
    <property type="evidence" value="ECO:0007669"/>
    <property type="project" value="UniProtKB-UniRule"/>
</dbReference>
<dbReference type="GO" id="GO:0048038">
    <property type="term" value="F:quinone binding"/>
    <property type="evidence" value="ECO:0007669"/>
    <property type="project" value="UniProtKB-KW"/>
</dbReference>
<dbReference type="GO" id="GO:0009060">
    <property type="term" value="P:aerobic respiration"/>
    <property type="evidence" value="ECO:0007669"/>
    <property type="project" value="TreeGrafter"/>
</dbReference>
<dbReference type="GO" id="GO:0015990">
    <property type="term" value="P:electron transport coupled proton transport"/>
    <property type="evidence" value="ECO:0007669"/>
    <property type="project" value="TreeGrafter"/>
</dbReference>
<dbReference type="FunFam" id="3.40.50.12280:FF:000002">
    <property type="entry name" value="NADH-quinone oxidoreductase subunit B"/>
    <property type="match status" value="1"/>
</dbReference>
<dbReference type="Gene3D" id="3.40.50.12280">
    <property type="match status" value="1"/>
</dbReference>
<dbReference type="HAMAP" id="MF_01356">
    <property type="entry name" value="NDH1_NuoB"/>
    <property type="match status" value="1"/>
</dbReference>
<dbReference type="InterPro" id="IPR006137">
    <property type="entry name" value="NADH_UbQ_OxRdtase-like_20kDa"/>
</dbReference>
<dbReference type="InterPro" id="IPR006138">
    <property type="entry name" value="NADH_UQ_OxRdtase_20Kd_su"/>
</dbReference>
<dbReference type="NCBIfam" id="TIGR01957">
    <property type="entry name" value="nuoB_fam"/>
    <property type="match status" value="1"/>
</dbReference>
<dbReference type="NCBIfam" id="NF005012">
    <property type="entry name" value="PRK06411.1"/>
    <property type="match status" value="1"/>
</dbReference>
<dbReference type="PANTHER" id="PTHR11995">
    <property type="entry name" value="NADH DEHYDROGENASE"/>
    <property type="match status" value="1"/>
</dbReference>
<dbReference type="PANTHER" id="PTHR11995:SF14">
    <property type="entry name" value="NADH DEHYDROGENASE [UBIQUINONE] IRON-SULFUR PROTEIN 7, MITOCHONDRIAL"/>
    <property type="match status" value="1"/>
</dbReference>
<dbReference type="Pfam" id="PF01058">
    <property type="entry name" value="Oxidored_q6"/>
    <property type="match status" value="1"/>
</dbReference>
<dbReference type="SUPFAM" id="SSF56770">
    <property type="entry name" value="HydA/Nqo6-like"/>
    <property type="match status" value="1"/>
</dbReference>
<dbReference type="PROSITE" id="PS01150">
    <property type="entry name" value="COMPLEX1_20K"/>
    <property type="match status" value="1"/>
</dbReference>
<gene>
    <name evidence="1" type="primary">nuoB</name>
    <name type="ordered locus">SbBS512_E2663</name>
</gene>
<protein>
    <recommendedName>
        <fullName evidence="1">NADH-quinone oxidoreductase subunit B</fullName>
        <ecNumber evidence="1">7.1.1.-</ecNumber>
    </recommendedName>
    <alternativeName>
        <fullName evidence="1">NADH dehydrogenase I subunit B</fullName>
    </alternativeName>
    <alternativeName>
        <fullName evidence="1">NDH-1 subunit B</fullName>
    </alternativeName>
</protein>
<name>NUOB_SHIB3</name>
<sequence length="220" mass="25056">MDYTLTRIDPNGENDRYPLQKQEIVTDPLEQEVNKNVFMGKLNDMVNWGRKNSIWPYNFGLSCCYVEMVTSFTAVHDVARFGAEVLRASPRQADLMVVAGTCFTKMAPVIQRLYDQMLEPKWVISMGACANSGGMYDIYSVVQGVDKFIPVDVYIPGCPPRPEAYMQALMLLQESIGKERRPLSWVVGDQGVYRANMQSERERKRGERIAVTNLRTPDEI</sequence>
<proteinExistence type="inferred from homology"/>
<keyword id="KW-0004">4Fe-4S</keyword>
<keyword id="KW-0997">Cell inner membrane</keyword>
<keyword id="KW-1003">Cell membrane</keyword>
<keyword id="KW-0408">Iron</keyword>
<keyword id="KW-0411">Iron-sulfur</keyword>
<keyword id="KW-0472">Membrane</keyword>
<keyword id="KW-0479">Metal-binding</keyword>
<keyword id="KW-0520">NAD</keyword>
<keyword id="KW-0874">Quinone</keyword>
<keyword id="KW-1185">Reference proteome</keyword>
<keyword id="KW-1278">Translocase</keyword>
<keyword id="KW-0813">Transport</keyword>
<keyword id="KW-0830">Ubiquinone</keyword>
<evidence type="ECO:0000255" key="1">
    <source>
        <dbReference type="HAMAP-Rule" id="MF_01356"/>
    </source>
</evidence>
<comment type="function">
    <text evidence="1">NDH-1 shuttles electrons from NADH, via FMN and iron-sulfur (Fe-S) centers, to quinones in the respiratory chain. The immediate electron acceptor for the enzyme in this species is believed to be ubiquinone. Couples the redox reaction to proton translocation (for every two electrons transferred, four hydrogen ions are translocated across the cytoplasmic membrane), and thus conserves the redox energy in a proton gradient.</text>
</comment>
<comment type="catalytic activity">
    <reaction evidence="1">
        <text>a quinone + NADH + 5 H(+)(in) = a quinol + NAD(+) + 4 H(+)(out)</text>
        <dbReference type="Rhea" id="RHEA:57888"/>
        <dbReference type="ChEBI" id="CHEBI:15378"/>
        <dbReference type="ChEBI" id="CHEBI:24646"/>
        <dbReference type="ChEBI" id="CHEBI:57540"/>
        <dbReference type="ChEBI" id="CHEBI:57945"/>
        <dbReference type="ChEBI" id="CHEBI:132124"/>
    </reaction>
</comment>
<comment type="cofactor">
    <cofactor evidence="1">
        <name>[4Fe-4S] cluster</name>
        <dbReference type="ChEBI" id="CHEBI:49883"/>
    </cofactor>
    <text evidence="1">Binds 1 [4Fe-4S] cluster.</text>
</comment>
<comment type="subunit">
    <text evidence="1">NDH-1 is composed of 13 different subunits. Subunits NuoB, CD, E, F, and G constitute the peripheral sector of the complex.</text>
</comment>
<comment type="subcellular location">
    <subcellularLocation>
        <location evidence="1">Cell inner membrane</location>
        <topology evidence="1">Peripheral membrane protein</topology>
        <orientation evidence="1">Cytoplasmic side</orientation>
    </subcellularLocation>
</comment>
<comment type="similarity">
    <text evidence="1">Belongs to the complex I 20 kDa subunit family.</text>
</comment>
<feature type="chain" id="PRO_0000376375" description="NADH-quinone oxidoreductase subunit B">
    <location>
        <begin position="1"/>
        <end position="220"/>
    </location>
</feature>
<feature type="binding site" evidence="1">
    <location>
        <position position="63"/>
    </location>
    <ligand>
        <name>[4Fe-4S] cluster</name>
        <dbReference type="ChEBI" id="CHEBI:49883"/>
    </ligand>
</feature>
<feature type="binding site" evidence="1">
    <location>
        <position position="64"/>
    </location>
    <ligand>
        <name>[4Fe-4S] cluster</name>
        <dbReference type="ChEBI" id="CHEBI:49883"/>
    </ligand>
</feature>
<feature type="binding site" evidence="1">
    <location>
        <position position="129"/>
    </location>
    <ligand>
        <name>[4Fe-4S] cluster</name>
        <dbReference type="ChEBI" id="CHEBI:49883"/>
    </ligand>
</feature>
<feature type="binding site" evidence="1">
    <location>
        <position position="158"/>
    </location>
    <ligand>
        <name>[4Fe-4S] cluster</name>
        <dbReference type="ChEBI" id="CHEBI:49883"/>
    </ligand>
</feature>
<reference key="1">
    <citation type="submission" date="2008-05" db="EMBL/GenBank/DDBJ databases">
        <title>Complete sequence of Shigella boydii serotype 18 strain BS512.</title>
        <authorList>
            <person name="Rasko D.A."/>
            <person name="Rosovitz M."/>
            <person name="Maurelli A.T."/>
            <person name="Myers G."/>
            <person name="Seshadri R."/>
            <person name="Cer R."/>
            <person name="Jiang L."/>
            <person name="Ravel J."/>
            <person name="Sebastian Y."/>
        </authorList>
    </citation>
    <scope>NUCLEOTIDE SEQUENCE [LARGE SCALE GENOMIC DNA]</scope>
    <source>
        <strain>CDC 3083-94 / BS512</strain>
    </source>
</reference>
<organism>
    <name type="scientific">Shigella boydii serotype 18 (strain CDC 3083-94 / BS512)</name>
    <dbReference type="NCBI Taxonomy" id="344609"/>
    <lineage>
        <taxon>Bacteria</taxon>
        <taxon>Pseudomonadati</taxon>
        <taxon>Pseudomonadota</taxon>
        <taxon>Gammaproteobacteria</taxon>
        <taxon>Enterobacterales</taxon>
        <taxon>Enterobacteriaceae</taxon>
        <taxon>Shigella</taxon>
    </lineage>
</organism>